<accession>B2VII6</accession>
<comment type="similarity">
    <text evidence="1">Belongs to the UPF0352 family.</text>
</comment>
<sequence>MAQSSRYSNERVEKILAEMVQVLEKNQTPTDLSLMVLGNMVTNLLNTSVAPAQRQAMARSFADALQASVRDDPSH</sequence>
<organism>
    <name type="scientific">Erwinia tasmaniensis (strain DSM 17950 / CFBP 7177 / CIP 109463 / NCPPB 4357 / Et1/99)</name>
    <dbReference type="NCBI Taxonomy" id="465817"/>
    <lineage>
        <taxon>Bacteria</taxon>
        <taxon>Pseudomonadati</taxon>
        <taxon>Pseudomonadota</taxon>
        <taxon>Gammaproteobacteria</taxon>
        <taxon>Enterobacterales</taxon>
        <taxon>Erwiniaceae</taxon>
        <taxon>Erwinia</taxon>
    </lineage>
</organism>
<protein>
    <recommendedName>
        <fullName evidence="1">UPF0352 protein ETA_12580</fullName>
    </recommendedName>
</protein>
<reference key="1">
    <citation type="journal article" date="2008" name="Environ. Microbiol.">
        <title>The genome of Erwinia tasmaniensis strain Et1/99, a non-pathogenic bacterium in the genus Erwinia.</title>
        <authorList>
            <person name="Kube M."/>
            <person name="Migdoll A.M."/>
            <person name="Mueller I."/>
            <person name="Kuhl H."/>
            <person name="Beck A."/>
            <person name="Reinhardt R."/>
            <person name="Geider K."/>
        </authorList>
    </citation>
    <scope>NUCLEOTIDE SEQUENCE [LARGE SCALE GENOMIC DNA]</scope>
    <source>
        <strain>DSM 17950 / CFBP 7177 / CIP 109463 / NCPPB 4357 / Et1/99</strain>
    </source>
</reference>
<dbReference type="EMBL" id="CU468135">
    <property type="protein sequence ID" value="CAO96304.1"/>
    <property type="molecule type" value="Genomic_DNA"/>
</dbReference>
<dbReference type="RefSeq" id="WP_012440998.1">
    <property type="nucleotide sequence ID" value="NC_010694.1"/>
</dbReference>
<dbReference type="SMR" id="B2VII6"/>
<dbReference type="STRING" id="465817.ETA_12580"/>
<dbReference type="KEGG" id="eta:ETA_12580"/>
<dbReference type="eggNOG" id="COG3082">
    <property type="taxonomic scope" value="Bacteria"/>
</dbReference>
<dbReference type="HOGENOM" id="CLU_175457_0_0_6"/>
<dbReference type="OrthoDB" id="5771474at2"/>
<dbReference type="Proteomes" id="UP000001726">
    <property type="component" value="Chromosome"/>
</dbReference>
<dbReference type="Gene3D" id="1.10.3390.10">
    <property type="entry name" value="YejL-like"/>
    <property type="match status" value="1"/>
</dbReference>
<dbReference type="HAMAP" id="MF_00816">
    <property type="entry name" value="UPF0352"/>
    <property type="match status" value="1"/>
</dbReference>
<dbReference type="InterPro" id="IPR009857">
    <property type="entry name" value="UPF0352"/>
</dbReference>
<dbReference type="InterPro" id="IPR023202">
    <property type="entry name" value="YejL_sf"/>
</dbReference>
<dbReference type="NCBIfam" id="NF010242">
    <property type="entry name" value="PRK13689.1"/>
    <property type="match status" value="1"/>
</dbReference>
<dbReference type="Pfam" id="PF07208">
    <property type="entry name" value="DUF1414"/>
    <property type="match status" value="1"/>
</dbReference>
<dbReference type="PIRSF" id="PIRSF006188">
    <property type="entry name" value="UCP006188"/>
    <property type="match status" value="1"/>
</dbReference>
<dbReference type="SUPFAM" id="SSF158651">
    <property type="entry name" value="YejL-like"/>
    <property type="match status" value="1"/>
</dbReference>
<keyword id="KW-1185">Reference proteome</keyword>
<evidence type="ECO:0000255" key="1">
    <source>
        <dbReference type="HAMAP-Rule" id="MF_00816"/>
    </source>
</evidence>
<proteinExistence type="inferred from homology"/>
<name>Y1258_ERWT9</name>
<gene>
    <name type="ordered locus">ETA_12580</name>
</gene>
<feature type="chain" id="PRO_1000199581" description="UPF0352 protein ETA_12580">
    <location>
        <begin position="1"/>
        <end position="75"/>
    </location>
</feature>